<comment type="catalytic activity">
    <reaction>
        <text>D-mannitol 1-phosphate + NAD(+) = beta-D-fructose 6-phosphate + NADH + H(+)</text>
        <dbReference type="Rhea" id="RHEA:19661"/>
        <dbReference type="ChEBI" id="CHEBI:15378"/>
        <dbReference type="ChEBI" id="CHEBI:57540"/>
        <dbReference type="ChEBI" id="CHEBI:57634"/>
        <dbReference type="ChEBI" id="CHEBI:57945"/>
        <dbReference type="ChEBI" id="CHEBI:61381"/>
        <dbReference type="EC" id="1.1.1.17"/>
    </reaction>
</comment>
<comment type="similarity">
    <text evidence="2">Belongs to the mannitol dehydrogenase family.</text>
</comment>
<accession>O65992</accession>
<gene>
    <name type="primary">mtlD</name>
    <name type="ordered locus">CA_C0157</name>
</gene>
<reference key="1">
    <citation type="journal article" date="2001" name="Microbiology">
        <title>Molecular analysis of the mannitol operon of Clostridium acetobutylicum encoding a phosphotransferase system and a putative PTS-modulated regulator.</title>
        <authorList>
            <person name="Behrens S."/>
            <person name="Mitchell W.J."/>
            <person name="Bahl H."/>
        </authorList>
    </citation>
    <scope>NUCLEOTIDE SEQUENCE [GENOMIC DNA]</scope>
    <source>
        <strain>ATCC 824 / DSM 792 / JCM 1419 / IAM 19013 / LMG 5710 / NBRC 13948 / NRRL B-527 / VKM B-1787 / 2291 / W</strain>
    </source>
</reference>
<reference key="2">
    <citation type="journal article" date="2001" name="J. Bacteriol.">
        <title>Genome sequence and comparative analysis of the solvent-producing bacterium Clostridium acetobutylicum.</title>
        <authorList>
            <person name="Noelling J."/>
            <person name="Breton G."/>
            <person name="Omelchenko M.V."/>
            <person name="Makarova K.S."/>
            <person name="Zeng Q."/>
            <person name="Gibson R."/>
            <person name="Lee H.M."/>
            <person name="Dubois J."/>
            <person name="Qiu D."/>
            <person name="Hitti J."/>
            <person name="Wolf Y.I."/>
            <person name="Tatusov R.L."/>
            <person name="Sabathe F."/>
            <person name="Doucette-Stamm L.A."/>
            <person name="Soucaille P."/>
            <person name="Daly M.J."/>
            <person name="Bennett G.N."/>
            <person name="Koonin E.V."/>
            <person name="Smith D.R."/>
        </authorList>
    </citation>
    <scope>NUCLEOTIDE SEQUENCE [LARGE SCALE GENOMIC DNA]</scope>
    <source>
        <strain>ATCC 824 / DSM 792 / JCM 1419 / IAM 19013 / LMG 5710 / NBRC 13948 / NRRL B-527 / VKM B-1787 / 2291 / W</strain>
    </source>
</reference>
<dbReference type="EC" id="1.1.1.17"/>
<dbReference type="EMBL" id="U53868">
    <property type="protein sequence ID" value="AAC12851.1"/>
    <property type="molecule type" value="Genomic_DNA"/>
</dbReference>
<dbReference type="EMBL" id="AE001437">
    <property type="protein sequence ID" value="AAK78141.1"/>
    <property type="molecule type" value="Genomic_DNA"/>
</dbReference>
<dbReference type="PIR" id="B96919">
    <property type="entry name" value="B96919"/>
</dbReference>
<dbReference type="RefSeq" id="NP_346801.1">
    <property type="nucleotide sequence ID" value="NC_003030.1"/>
</dbReference>
<dbReference type="RefSeq" id="WP_010963483.1">
    <property type="nucleotide sequence ID" value="NC_003030.1"/>
</dbReference>
<dbReference type="SMR" id="O65992"/>
<dbReference type="STRING" id="272562.CA_C0157"/>
<dbReference type="KEGG" id="cac:CA_C0157"/>
<dbReference type="PATRIC" id="fig|272562.8.peg.341"/>
<dbReference type="eggNOG" id="COG0246">
    <property type="taxonomic scope" value="Bacteria"/>
</dbReference>
<dbReference type="HOGENOM" id="CLU_036089_2_0_9"/>
<dbReference type="OrthoDB" id="271711at2"/>
<dbReference type="Proteomes" id="UP000000814">
    <property type="component" value="Chromosome"/>
</dbReference>
<dbReference type="GO" id="GO:0005829">
    <property type="term" value="C:cytosol"/>
    <property type="evidence" value="ECO:0007669"/>
    <property type="project" value="TreeGrafter"/>
</dbReference>
<dbReference type="GO" id="GO:0008926">
    <property type="term" value="F:mannitol-1-phosphate 5-dehydrogenase activity"/>
    <property type="evidence" value="ECO:0007669"/>
    <property type="project" value="UniProtKB-UniRule"/>
</dbReference>
<dbReference type="GO" id="GO:0019592">
    <property type="term" value="P:mannitol catabolic process"/>
    <property type="evidence" value="ECO:0007669"/>
    <property type="project" value="TreeGrafter"/>
</dbReference>
<dbReference type="Gene3D" id="1.10.1040.10">
    <property type="entry name" value="N-(1-d-carboxylethyl)-l-norvaline Dehydrogenase, domain 2"/>
    <property type="match status" value="1"/>
</dbReference>
<dbReference type="Gene3D" id="3.40.50.720">
    <property type="entry name" value="NAD(P)-binding Rossmann-like Domain"/>
    <property type="match status" value="1"/>
</dbReference>
<dbReference type="HAMAP" id="MF_00196">
    <property type="entry name" value="Mannitol_dehydrog"/>
    <property type="match status" value="1"/>
</dbReference>
<dbReference type="InterPro" id="IPR008927">
    <property type="entry name" value="6-PGluconate_DH-like_C_sf"/>
</dbReference>
<dbReference type="InterPro" id="IPR013328">
    <property type="entry name" value="6PGD_dom2"/>
</dbReference>
<dbReference type="InterPro" id="IPR023028">
    <property type="entry name" value="Mannitol_1_phos_5_DH"/>
</dbReference>
<dbReference type="InterPro" id="IPR000669">
    <property type="entry name" value="Mannitol_DH"/>
</dbReference>
<dbReference type="InterPro" id="IPR013118">
    <property type="entry name" value="Mannitol_DH_C"/>
</dbReference>
<dbReference type="InterPro" id="IPR023027">
    <property type="entry name" value="Mannitol_DH_CS"/>
</dbReference>
<dbReference type="InterPro" id="IPR013131">
    <property type="entry name" value="Mannitol_DH_N"/>
</dbReference>
<dbReference type="InterPro" id="IPR036291">
    <property type="entry name" value="NAD(P)-bd_dom_sf"/>
</dbReference>
<dbReference type="NCBIfam" id="NF002652">
    <property type="entry name" value="PRK02318.2-5"/>
    <property type="match status" value="1"/>
</dbReference>
<dbReference type="NCBIfam" id="NF002653">
    <property type="entry name" value="PRK02318.2-6"/>
    <property type="match status" value="1"/>
</dbReference>
<dbReference type="PANTHER" id="PTHR30524:SF0">
    <property type="entry name" value="ALTRONATE OXIDOREDUCTASE-RELATED"/>
    <property type="match status" value="1"/>
</dbReference>
<dbReference type="PANTHER" id="PTHR30524">
    <property type="entry name" value="MANNITOL-1-PHOSPHATE 5-DEHYDROGENASE"/>
    <property type="match status" value="1"/>
</dbReference>
<dbReference type="Pfam" id="PF01232">
    <property type="entry name" value="Mannitol_dh"/>
    <property type="match status" value="1"/>
</dbReference>
<dbReference type="Pfam" id="PF08125">
    <property type="entry name" value="Mannitol_dh_C"/>
    <property type="match status" value="1"/>
</dbReference>
<dbReference type="PRINTS" id="PR00084">
    <property type="entry name" value="MTLDHDRGNASE"/>
</dbReference>
<dbReference type="SUPFAM" id="SSF48179">
    <property type="entry name" value="6-phosphogluconate dehydrogenase C-terminal domain-like"/>
    <property type="match status" value="1"/>
</dbReference>
<dbReference type="SUPFAM" id="SSF51735">
    <property type="entry name" value="NAD(P)-binding Rossmann-fold domains"/>
    <property type="match status" value="1"/>
</dbReference>
<dbReference type="PROSITE" id="PS00974">
    <property type="entry name" value="MANNITOL_DHGENASE"/>
    <property type="match status" value="1"/>
</dbReference>
<keyword id="KW-0520">NAD</keyword>
<keyword id="KW-0560">Oxidoreductase</keyword>
<keyword id="KW-1185">Reference proteome</keyword>
<sequence>MKALHFGAGNIGRGFIGYLLYKSNYETTFVDIFDKVVDDINKYKRYTVITLSTSKNKEKVENVRAVNLKDSVALEKEVLEADLITTSLGLNNLKSTGELLRGFLKKRSEINDKPLDIIACENALFASDVLKKAILDGADEELKKYLEKSVGFPNCTVDRIVPNVDIEKELPIDVAVEDFYEWDIEKNKVKINNKIIGAEYVEKLDPYLERKLFLLNGAHATIAYLGYLKGYKYIHEAIKDKEINKIIVGFHSEAVQALSEKHKIDIQILKEYSNKLLKRFENEYLKDDVSRVGRDPMRKLSSNDRLITPLKLCCDLKIDFTNILFGVASGYLFNYKEDEKAQGIQNIITKEGIKKAISNVSQIKEGDYLNNMIAYKYEELKKQN</sequence>
<name>MTLD_CLOAB</name>
<proteinExistence type="inferred from homology"/>
<organism>
    <name type="scientific">Clostridium acetobutylicum (strain ATCC 824 / DSM 792 / JCM 1419 / IAM 19013 / LMG 5710 / NBRC 13948 / NRRL B-527 / VKM B-1787 / 2291 / W)</name>
    <dbReference type="NCBI Taxonomy" id="272562"/>
    <lineage>
        <taxon>Bacteria</taxon>
        <taxon>Bacillati</taxon>
        <taxon>Bacillota</taxon>
        <taxon>Clostridia</taxon>
        <taxon>Eubacteriales</taxon>
        <taxon>Clostridiaceae</taxon>
        <taxon>Clostridium</taxon>
    </lineage>
</organism>
<feature type="chain" id="PRO_0000170702" description="Mannitol-1-phosphate 5-dehydrogenase">
    <location>
        <begin position="1"/>
        <end position="384"/>
    </location>
</feature>
<feature type="binding site" evidence="1">
    <location>
        <begin position="3"/>
        <end position="14"/>
    </location>
    <ligand>
        <name>NAD(+)</name>
        <dbReference type="ChEBI" id="CHEBI:57540"/>
    </ligand>
</feature>
<protein>
    <recommendedName>
        <fullName>Mannitol-1-phosphate 5-dehydrogenase</fullName>
        <ecNumber>1.1.1.17</ecNumber>
    </recommendedName>
</protein>
<evidence type="ECO:0000250" key="1"/>
<evidence type="ECO:0000305" key="2"/>